<reference key="1">
    <citation type="journal article" date="2005" name="Proc. Natl. Acad. Sci. U.S.A.">
        <title>The genome of Salinibacter ruber: convergence and gene exchange among hyperhalophilic bacteria and archaea.</title>
        <authorList>
            <person name="Mongodin E.F."/>
            <person name="Nelson K.E."/>
            <person name="Daugherty S."/>
            <person name="DeBoy R.T."/>
            <person name="Wister J."/>
            <person name="Khouri H."/>
            <person name="Weidman J."/>
            <person name="Walsh D.A."/>
            <person name="Papke R.T."/>
            <person name="Sanchez Perez G."/>
            <person name="Sharma A.K."/>
            <person name="Nesbo C.L."/>
            <person name="MacLeod D."/>
            <person name="Bapteste E."/>
            <person name="Doolittle W.F."/>
            <person name="Charlebois R.L."/>
            <person name="Legault B."/>
            <person name="Rodriguez-Valera F."/>
        </authorList>
    </citation>
    <scope>NUCLEOTIDE SEQUENCE [LARGE SCALE GENOMIC DNA]</scope>
    <source>
        <strain>DSM 13855 / CECT 5946 / M31</strain>
    </source>
</reference>
<accession>Q2RZX7</accession>
<protein>
    <recommendedName>
        <fullName evidence="1">Catalase-peroxidase</fullName>
        <shortName evidence="1">CP</shortName>
        <ecNumber evidence="1">1.11.1.21</ecNumber>
    </recommendedName>
    <alternativeName>
        <fullName evidence="1">Peroxidase/catalase</fullName>
    </alternativeName>
</protein>
<feature type="chain" id="PRO_0000354901" description="Catalase-peroxidase">
    <location>
        <begin position="1"/>
        <end position="729"/>
    </location>
</feature>
<feature type="region of interest" description="Disordered" evidence="2">
    <location>
        <begin position="1"/>
        <end position="20"/>
    </location>
</feature>
<feature type="compositionally biased region" description="Basic and acidic residues" evidence="2">
    <location>
        <begin position="10"/>
        <end position="20"/>
    </location>
</feature>
<feature type="active site" description="Proton acceptor" evidence="1">
    <location>
        <position position="92"/>
    </location>
</feature>
<feature type="binding site" description="axial binding residue" evidence="1">
    <location>
        <position position="255"/>
    </location>
    <ligand>
        <name>heme b</name>
        <dbReference type="ChEBI" id="CHEBI:60344"/>
    </ligand>
    <ligandPart>
        <name>Fe</name>
        <dbReference type="ChEBI" id="CHEBI:18248"/>
    </ligandPart>
</feature>
<feature type="site" description="Transition state stabilizer" evidence="1">
    <location>
        <position position="88"/>
    </location>
</feature>
<feature type="cross-link" description="Tryptophyl-tyrosyl-methioninium (Trp-Tyr) (with M-240)" evidence="1">
    <location>
        <begin position="91"/>
        <end position="214"/>
    </location>
</feature>
<feature type="cross-link" description="Tryptophyl-tyrosyl-methioninium (Tyr-Met) (with W-91)" evidence="1">
    <location>
        <begin position="214"/>
        <end position="240"/>
    </location>
</feature>
<dbReference type="EC" id="1.11.1.21" evidence="1"/>
<dbReference type="EMBL" id="CP000159">
    <property type="protein sequence ID" value="ABC45695.1"/>
    <property type="molecule type" value="Genomic_DNA"/>
</dbReference>
<dbReference type="RefSeq" id="YP_446504.1">
    <property type="nucleotide sequence ID" value="NC_007677.1"/>
</dbReference>
<dbReference type="SMR" id="Q2RZX7"/>
<dbReference type="STRING" id="309807.SRU_2405"/>
<dbReference type="PeroxiBase" id="3063">
    <property type="entry name" value="SruCP01"/>
</dbReference>
<dbReference type="EnsemblBacteria" id="ABC45695">
    <property type="protein sequence ID" value="ABC45695"/>
    <property type="gene ID" value="SRU_2405"/>
</dbReference>
<dbReference type="KEGG" id="sru:SRU_2405"/>
<dbReference type="PATRIC" id="fig|309807.25.peg.2505"/>
<dbReference type="eggNOG" id="COG0376">
    <property type="taxonomic scope" value="Bacteria"/>
</dbReference>
<dbReference type="HOGENOM" id="CLU_025424_2_0_10"/>
<dbReference type="OrthoDB" id="9759743at2"/>
<dbReference type="Proteomes" id="UP000008674">
    <property type="component" value="Chromosome"/>
</dbReference>
<dbReference type="GO" id="GO:0005829">
    <property type="term" value="C:cytosol"/>
    <property type="evidence" value="ECO:0007669"/>
    <property type="project" value="TreeGrafter"/>
</dbReference>
<dbReference type="GO" id="GO:0004096">
    <property type="term" value="F:catalase activity"/>
    <property type="evidence" value="ECO:0007669"/>
    <property type="project" value="UniProtKB-UniRule"/>
</dbReference>
<dbReference type="GO" id="GO:0020037">
    <property type="term" value="F:heme binding"/>
    <property type="evidence" value="ECO:0007669"/>
    <property type="project" value="InterPro"/>
</dbReference>
<dbReference type="GO" id="GO:0046872">
    <property type="term" value="F:metal ion binding"/>
    <property type="evidence" value="ECO:0007669"/>
    <property type="project" value="UniProtKB-KW"/>
</dbReference>
<dbReference type="GO" id="GO:0070301">
    <property type="term" value="P:cellular response to hydrogen peroxide"/>
    <property type="evidence" value="ECO:0007669"/>
    <property type="project" value="TreeGrafter"/>
</dbReference>
<dbReference type="GO" id="GO:0042744">
    <property type="term" value="P:hydrogen peroxide catabolic process"/>
    <property type="evidence" value="ECO:0007669"/>
    <property type="project" value="UniProtKB-KW"/>
</dbReference>
<dbReference type="CDD" id="cd08200">
    <property type="entry name" value="catalase_peroxidase_2"/>
    <property type="match status" value="1"/>
</dbReference>
<dbReference type="FunFam" id="1.10.520.10:FF:000002">
    <property type="entry name" value="Catalase-peroxidase"/>
    <property type="match status" value="1"/>
</dbReference>
<dbReference type="Gene3D" id="1.10.520.10">
    <property type="match status" value="2"/>
</dbReference>
<dbReference type="Gene3D" id="1.10.420.10">
    <property type="entry name" value="Peroxidase, domain 2"/>
    <property type="match status" value="2"/>
</dbReference>
<dbReference type="HAMAP" id="MF_01961">
    <property type="entry name" value="Catal_peroxid"/>
    <property type="match status" value="1"/>
</dbReference>
<dbReference type="InterPro" id="IPR000763">
    <property type="entry name" value="Catalase_peroxidase"/>
</dbReference>
<dbReference type="InterPro" id="IPR002016">
    <property type="entry name" value="Haem_peroxidase"/>
</dbReference>
<dbReference type="InterPro" id="IPR010255">
    <property type="entry name" value="Haem_peroxidase_sf"/>
</dbReference>
<dbReference type="InterPro" id="IPR019794">
    <property type="entry name" value="Peroxidases_AS"/>
</dbReference>
<dbReference type="InterPro" id="IPR019793">
    <property type="entry name" value="Peroxidases_heam-ligand_BS"/>
</dbReference>
<dbReference type="NCBIfam" id="TIGR00198">
    <property type="entry name" value="cat_per_HPI"/>
    <property type="match status" value="1"/>
</dbReference>
<dbReference type="NCBIfam" id="NF011635">
    <property type="entry name" value="PRK15061.1"/>
    <property type="match status" value="1"/>
</dbReference>
<dbReference type="PANTHER" id="PTHR30555:SF0">
    <property type="entry name" value="CATALASE-PEROXIDASE"/>
    <property type="match status" value="1"/>
</dbReference>
<dbReference type="PANTHER" id="PTHR30555">
    <property type="entry name" value="HYDROPEROXIDASE I, BIFUNCTIONAL CATALASE-PEROXIDASE"/>
    <property type="match status" value="1"/>
</dbReference>
<dbReference type="Pfam" id="PF00141">
    <property type="entry name" value="peroxidase"/>
    <property type="match status" value="2"/>
</dbReference>
<dbReference type="PRINTS" id="PR00460">
    <property type="entry name" value="BPEROXIDASE"/>
</dbReference>
<dbReference type="PRINTS" id="PR00458">
    <property type="entry name" value="PEROXIDASE"/>
</dbReference>
<dbReference type="SUPFAM" id="SSF48113">
    <property type="entry name" value="Heme-dependent peroxidases"/>
    <property type="match status" value="2"/>
</dbReference>
<dbReference type="PROSITE" id="PS00435">
    <property type="entry name" value="PEROXIDASE_1"/>
    <property type="match status" value="1"/>
</dbReference>
<dbReference type="PROSITE" id="PS00436">
    <property type="entry name" value="PEROXIDASE_2"/>
    <property type="match status" value="1"/>
</dbReference>
<dbReference type="PROSITE" id="PS50873">
    <property type="entry name" value="PEROXIDASE_4"/>
    <property type="match status" value="1"/>
</dbReference>
<sequence length="729" mass="82038">MHNGSNGSVEQRDSMPETSREWWPGSLDVEILDQNAQDVGPWNGDFDYAEAFQELDYEALKEDIEEVMTTSKDWWPADYGHYGPLFIRMSWHAAGTYRTTDGRGGSSGGRQRLAPLNSWPDNANLDKARRLLWPVKQKYGRKISWADLLVLAGNVAMESMGFETFGFAGGREDDFKPDESIDWGPEDEMETWGRFNEEDELDNPLGATVMGLIYVNPEGPESTPDPEWSAQRIRKSFGRMAMNDRETAALIAGGHTFGKVHGADTDEHLQAEPEAAPIEQQGLGWHNEHGSGKGGDTITSGIEGPWTDAPTEWDMGYLDFLLDYEWEVHKGPGGAWQWRPKSDELKGVVPDAHDASETVDPMMLTTDVALKRDPDYREIIEDFRENPDAFEDAFARAWFKLLHRDMGPKERYLGPEVPEEDLIWQDPVPDADHDLIGDEEIAELKEAILETDLSVSRLVKTAWASASTYRDSDKRGGANGARIRLEPHRNWEANEPPQLAHALEVLTGIQKNFNDARTDDVRVSLADLIVLGGSAAIEKAAADAGHDVEVPFTPGRTDATQEQTDVEAFEYLEPKADGFRNYIADDPWQDWTPEEFLVDKADLLNLTPAETTVLVGGMRALDATHEQADGYGVFTDRPETLNNDYFVNLLDMGHEWDPVSEDKQHFKIRDRDTGEVKWKATRVDLIFGSNSRFRALSQVYGSGDAEEKFVDDFVDAWTKVMNLDRFDLE</sequence>
<gene>
    <name evidence="1" type="primary">katG</name>
    <name type="ordered locus">SRU_2405</name>
</gene>
<organism>
    <name type="scientific">Salinibacter ruber (strain DSM 13855 / M31)</name>
    <dbReference type="NCBI Taxonomy" id="309807"/>
    <lineage>
        <taxon>Bacteria</taxon>
        <taxon>Pseudomonadati</taxon>
        <taxon>Rhodothermota</taxon>
        <taxon>Rhodothermia</taxon>
        <taxon>Rhodothermales</taxon>
        <taxon>Salinibacteraceae</taxon>
        <taxon>Salinibacter</taxon>
    </lineage>
</organism>
<proteinExistence type="inferred from homology"/>
<comment type="function">
    <text evidence="1">Bifunctional enzyme with both catalase and broad-spectrum peroxidase activity.</text>
</comment>
<comment type="catalytic activity">
    <reaction evidence="1">
        <text>H2O2 + AH2 = A + 2 H2O</text>
        <dbReference type="Rhea" id="RHEA:30275"/>
        <dbReference type="ChEBI" id="CHEBI:13193"/>
        <dbReference type="ChEBI" id="CHEBI:15377"/>
        <dbReference type="ChEBI" id="CHEBI:16240"/>
        <dbReference type="ChEBI" id="CHEBI:17499"/>
        <dbReference type="EC" id="1.11.1.21"/>
    </reaction>
</comment>
<comment type="catalytic activity">
    <reaction evidence="1">
        <text>2 H2O2 = O2 + 2 H2O</text>
        <dbReference type="Rhea" id="RHEA:20309"/>
        <dbReference type="ChEBI" id="CHEBI:15377"/>
        <dbReference type="ChEBI" id="CHEBI:15379"/>
        <dbReference type="ChEBI" id="CHEBI:16240"/>
        <dbReference type="EC" id="1.11.1.21"/>
    </reaction>
</comment>
<comment type="cofactor">
    <cofactor evidence="1">
        <name>heme b</name>
        <dbReference type="ChEBI" id="CHEBI:60344"/>
    </cofactor>
    <text evidence="1">Binds 1 heme b (iron(II)-protoporphyrin IX) group per dimer.</text>
</comment>
<comment type="subunit">
    <text evidence="1">Homodimer or homotetramer.</text>
</comment>
<comment type="PTM">
    <text evidence="1">Formation of the three residue Trp-Tyr-Met cross-link is important for the catalase, but not the peroxidase activity of the enzyme.</text>
</comment>
<comment type="similarity">
    <text evidence="1">Belongs to the peroxidase family. Peroxidase/catalase subfamily.</text>
</comment>
<evidence type="ECO:0000255" key="1">
    <source>
        <dbReference type="HAMAP-Rule" id="MF_01961"/>
    </source>
</evidence>
<evidence type="ECO:0000256" key="2">
    <source>
        <dbReference type="SAM" id="MobiDB-lite"/>
    </source>
</evidence>
<name>KATG_SALRD</name>
<keyword id="KW-0349">Heme</keyword>
<keyword id="KW-0376">Hydrogen peroxide</keyword>
<keyword id="KW-0408">Iron</keyword>
<keyword id="KW-0479">Metal-binding</keyword>
<keyword id="KW-0560">Oxidoreductase</keyword>
<keyword id="KW-0575">Peroxidase</keyword>
<keyword id="KW-1185">Reference proteome</keyword>